<dbReference type="EMBL" id="CU234118">
    <property type="protein sequence ID" value="CAL74957.1"/>
    <property type="molecule type" value="Genomic_DNA"/>
</dbReference>
<dbReference type="RefSeq" id="WP_011924206.1">
    <property type="nucleotide sequence ID" value="NC_009445.1"/>
</dbReference>
<dbReference type="SMR" id="A4YM31"/>
<dbReference type="STRING" id="114615.BRADO1043"/>
<dbReference type="KEGG" id="bra:BRADO1043"/>
<dbReference type="eggNOG" id="COG2371">
    <property type="taxonomic scope" value="Bacteria"/>
</dbReference>
<dbReference type="HOGENOM" id="CLU_093757_1_0_5"/>
<dbReference type="OrthoDB" id="9802215at2"/>
<dbReference type="Proteomes" id="UP000001994">
    <property type="component" value="Chromosome"/>
</dbReference>
<dbReference type="GO" id="GO:0005737">
    <property type="term" value="C:cytoplasm"/>
    <property type="evidence" value="ECO:0007669"/>
    <property type="project" value="UniProtKB-SubCell"/>
</dbReference>
<dbReference type="GO" id="GO:0016151">
    <property type="term" value="F:nickel cation binding"/>
    <property type="evidence" value="ECO:0007669"/>
    <property type="project" value="UniProtKB-UniRule"/>
</dbReference>
<dbReference type="GO" id="GO:0051082">
    <property type="term" value="F:unfolded protein binding"/>
    <property type="evidence" value="ECO:0007669"/>
    <property type="project" value="UniProtKB-UniRule"/>
</dbReference>
<dbReference type="GO" id="GO:0006457">
    <property type="term" value="P:protein folding"/>
    <property type="evidence" value="ECO:0007669"/>
    <property type="project" value="InterPro"/>
</dbReference>
<dbReference type="GO" id="GO:0065003">
    <property type="term" value="P:protein-containing complex assembly"/>
    <property type="evidence" value="ECO:0007669"/>
    <property type="project" value="InterPro"/>
</dbReference>
<dbReference type="GO" id="GO:0019627">
    <property type="term" value="P:urea metabolic process"/>
    <property type="evidence" value="ECO:0007669"/>
    <property type="project" value="InterPro"/>
</dbReference>
<dbReference type="CDD" id="cd00571">
    <property type="entry name" value="UreE"/>
    <property type="match status" value="1"/>
</dbReference>
<dbReference type="Gene3D" id="2.60.260.20">
    <property type="entry name" value="Urease metallochaperone UreE, N-terminal domain"/>
    <property type="match status" value="1"/>
</dbReference>
<dbReference type="Gene3D" id="3.30.70.790">
    <property type="entry name" value="UreE, C-terminal domain"/>
    <property type="match status" value="1"/>
</dbReference>
<dbReference type="HAMAP" id="MF_00822">
    <property type="entry name" value="UreE"/>
    <property type="match status" value="1"/>
</dbReference>
<dbReference type="InterPro" id="IPR012406">
    <property type="entry name" value="UreE"/>
</dbReference>
<dbReference type="InterPro" id="IPR007864">
    <property type="entry name" value="UreE_C_dom"/>
</dbReference>
<dbReference type="InterPro" id="IPR004029">
    <property type="entry name" value="UreE_N"/>
</dbReference>
<dbReference type="InterPro" id="IPR036118">
    <property type="entry name" value="UreE_N_sf"/>
</dbReference>
<dbReference type="Pfam" id="PF05194">
    <property type="entry name" value="UreE_C"/>
    <property type="match status" value="1"/>
</dbReference>
<dbReference type="Pfam" id="PF02814">
    <property type="entry name" value="UreE_N"/>
    <property type="match status" value="1"/>
</dbReference>
<dbReference type="SMART" id="SM00988">
    <property type="entry name" value="UreE_N"/>
    <property type="match status" value="1"/>
</dbReference>
<dbReference type="SUPFAM" id="SSF69737">
    <property type="entry name" value="Urease metallochaperone UreE, C-terminal domain"/>
    <property type="match status" value="1"/>
</dbReference>
<dbReference type="SUPFAM" id="SSF69287">
    <property type="entry name" value="Urease metallochaperone UreE, N-terminal domain"/>
    <property type="match status" value="1"/>
</dbReference>
<sequence length="210" mass="23714">MIRATRVLGQHRWKEAAADSVLLDFDDRHRRRLAMTGTRGLEFLLDLEHATALRGGDALVLEDGRLIEVVAAAEPLLEIRAGDPHHLVRLAWHLGNRHLPTQIMAKSLRIRRDHVIEAMVKGLGARVIEIEAPFDPEGGAYAEPSHAHGDHDHDHHGHDHHGHDHTSHDHAHHSHAHHDHDHGHAHDDHVHDEHCGHDHHHGHSHAHDHK</sequence>
<evidence type="ECO:0000255" key="1">
    <source>
        <dbReference type="HAMAP-Rule" id="MF_00822"/>
    </source>
</evidence>
<evidence type="ECO:0000256" key="2">
    <source>
        <dbReference type="SAM" id="MobiDB-lite"/>
    </source>
</evidence>
<keyword id="KW-0143">Chaperone</keyword>
<keyword id="KW-0963">Cytoplasm</keyword>
<keyword id="KW-0533">Nickel</keyword>
<keyword id="KW-0996">Nickel insertion</keyword>
<keyword id="KW-1185">Reference proteome</keyword>
<proteinExistence type="inferred from homology"/>
<gene>
    <name evidence="1" type="primary">ureE</name>
    <name type="ordered locus">BRADO1043</name>
</gene>
<protein>
    <recommendedName>
        <fullName evidence="1">Urease accessory protein UreE</fullName>
    </recommendedName>
</protein>
<feature type="chain" id="PRO_1000062543" description="Urease accessory protein UreE">
    <location>
        <begin position="1"/>
        <end position="210"/>
    </location>
</feature>
<feature type="region of interest" description="Disordered" evidence="2">
    <location>
        <begin position="136"/>
        <end position="210"/>
    </location>
</feature>
<feature type="compositionally biased region" description="Basic and acidic residues" evidence="2">
    <location>
        <begin position="145"/>
        <end position="169"/>
    </location>
</feature>
<feature type="compositionally biased region" description="Basic and acidic residues" evidence="2">
    <location>
        <begin position="178"/>
        <end position="196"/>
    </location>
</feature>
<feature type="compositionally biased region" description="Basic residues" evidence="2">
    <location>
        <begin position="197"/>
        <end position="210"/>
    </location>
</feature>
<name>UREE_BRASO</name>
<accession>A4YM31</accession>
<reference key="1">
    <citation type="journal article" date="2007" name="Science">
        <title>Legumes symbioses: absence of nod genes in photosynthetic bradyrhizobia.</title>
        <authorList>
            <person name="Giraud E."/>
            <person name="Moulin L."/>
            <person name="Vallenet D."/>
            <person name="Barbe V."/>
            <person name="Cytryn E."/>
            <person name="Avarre J.-C."/>
            <person name="Jaubert M."/>
            <person name="Simon D."/>
            <person name="Cartieaux F."/>
            <person name="Prin Y."/>
            <person name="Bena G."/>
            <person name="Hannibal L."/>
            <person name="Fardoux J."/>
            <person name="Kojadinovic M."/>
            <person name="Vuillet L."/>
            <person name="Lajus A."/>
            <person name="Cruveiller S."/>
            <person name="Rouy Z."/>
            <person name="Mangenot S."/>
            <person name="Segurens B."/>
            <person name="Dossat C."/>
            <person name="Franck W.L."/>
            <person name="Chang W.-S."/>
            <person name="Saunders E."/>
            <person name="Bruce D."/>
            <person name="Richardson P."/>
            <person name="Normand P."/>
            <person name="Dreyfus B."/>
            <person name="Pignol D."/>
            <person name="Stacey G."/>
            <person name="Emerich D."/>
            <person name="Vermeglio A."/>
            <person name="Medigue C."/>
            <person name="Sadowsky M."/>
        </authorList>
    </citation>
    <scope>NUCLEOTIDE SEQUENCE [LARGE SCALE GENOMIC DNA]</scope>
    <source>
        <strain>ORS 278</strain>
    </source>
</reference>
<comment type="function">
    <text evidence="1">Involved in urease metallocenter assembly. Binds nickel. Probably functions as a nickel donor during metallocenter assembly.</text>
</comment>
<comment type="subcellular location">
    <subcellularLocation>
        <location evidence="1">Cytoplasm</location>
    </subcellularLocation>
</comment>
<comment type="similarity">
    <text evidence="1">Belongs to the UreE family.</text>
</comment>
<organism>
    <name type="scientific">Bradyrhizobium sp. (strain ORS 278)</name>
    <dbReference type="NCBI Taxonomy" id="114615"/>
    <lineage>
        <taxon>Bacteria</taxon>
        <taxon>Pseudomonadati</taxon>
        <taxon>Pseudomonadota</taxon>
        <taxon>Alphaproteobacteria</taxon>
        <taxon>Hyphomicrobiales</taxon>
        <taxon>Nitrobacteraceae</taxon>
        <taxon>Bradyrhizobium</taxon>
    </lineage>
</organism>